<feature type="chain" id="PRO_1000147154" description="Ribosomal RNA small subunit methyltransferase A">
    <location>
        <begin position="1"/>
        <end position="290"/>
    </location>
</feature>
<feature type="binding site" evidence="1">
    <location>
        <position position="27"/>
    </location>
    <ligand>
        <name>S-adenosyl-L-methionine</name>
        <dbReference type="ChEBI" id="CHEBI:59789"/>
    </ligand>
</feature>
<feature type="binding site" evidence="1">
    <location>
        <position position="29"/>
    </location>
    <ligand>
        <name>S-adenosyl-L-methionine</name>
        <dbReference type="ChEBI" id="CHEBI:59789"/>
    </ligand>
</feature>
<feature type="binding site" evidence="1">
    <location>
        <position position="54"/>
    </location>
    <ligand>
        <name>S-adenosyl-L-methionine</name>
        <dbReference type="ChEBI" id="CHEBI:59789"/>
    </ligand>
</feature>
<feature type="binding site" evidence="1">
    <location>
        <position position="75"/>
    </location>
    <ligand>
        <name>S-adenosyl-L-methionine</name>
        <dbReference type="ChEBI" id="CHEBI:59789"/>
    </ligand>
</feature>
<feature type="binding site" evidence="1">
    <location>
        <position position="100"/>
    </location>
    <ligand>
        <name>S-adenosyl-L-methionine</name>
        <dbReference type="ChEBI" id="CHEBI:59789"/>
    </ligand>
</feature>
<feature type="binding site" evidence="1">
    <location>
        <position position="125"/>
    </location>
    <ligand>
        <name>S-adenosyl-L-methionine</name>
        <dbReference type="ChEBI" id="CHEBI:59789"/>
    </ligand>
</feature>
<organism>
    <name type="scientific">Streptococcus pneumoniae (strain JJA)</name>
    <dbReference type="NCBI Taxonomy" id="488222"/>
    <lineage>
        <taxon>Bacteria</taxon>
        <taxon>Bacillati</taxon>
        <taxon>Bacillota</taxon>
        <taxon>Bacilli</taxon>
        <taxon>Lactobacillales</taxon>
        <taxon>Streptococcaceae</taxon>
        <taxon>Streptococcus</taxon>
    </lineage>
</organism>
<protein>
    <recommendedName>
        <fullName evidence="1">Ribosomal RNA small subunit methyltransferase A</fullName>
        <ecNumber evidence="1">2.1.1.182</ecNumber>
    </recommendedName>
    <alternativeName>
        <fullName evidence="1">16S rRNA (adenine(1518)-N(6)/adenine(1519)-N(6))-dimethyltransferase</fullName>
    </alternativeName>
    <alternativeName>
        <fullName evidence="1">16S rRNA dimethyladenosine transferase</fullName>
    </alternativeName>
    <alternativeName>
        <fullName evidence="1">16S rRNA dimethylase</fullName>
    </alternativeName>
    <alternativeName>
        <fullName evidence="1">S-adenosylmethionine-6-N', N'-adenosyl(rRNA) dimethyltransferase</fullName>
    </alternativeName>
</protein>
<reference key="1">
    <citation type="journal article" date="2010" name="Genome Biol.">
        <title>Structure and dynamics of the pan-genome of Streptococcus pneumoniae and closely related species.</title>
        <authorList>
            <person name="Donati C."/>
            <person name="Hiller N.L."/>
            <person name="Tettelin H."/>
            <person name="Muzzi A."/>
            <person name="Croucher N.J."/>
            <person name="Angiuoli S.V."/>
            <person name="Oggioni M."/>
            <person name="Dunning Hotopp J.C."/>
            <person name="Hu F.Z."/>
            <person name="Riley D.R."/>
            <person name="Covacci A."/>
            <person name="Mitchell T.J."/>
            <person name="Bentley S.D."/>
            <person name="Kilian M."/>
            <person name="Ehrlich G.D."/>
            <person name="Rappuoli R."/>
            <person name="Moxon E.R."/>
            <person name="Masignani V."/>
        </authorList>
    </citation>
    <scope>NUCLEOTIDE SEQUENCE [LARGE SCALE GENOMIC DNA]</scope>
    <source>
        <strain>JJA</strain>
    </source>
</reference>
<dbReference type="EC" id="2.1.1.182" evidence="1"/>
<dbReference type="EMBL" id="CP000919">
    <property type="protein sequence ID" value="ACO18470.1"/>
    <property type="molecule type" value="Genomic_DNA"/>
</dbReference>
<dbReference type="RefSeq" id="WP_001216852.1">
    <property type="nucleotide sequence ID" value="NC_012466.1"/>
</dbReference>
<dbReference type="SMR" id="C1CGR5"/>
<dbReference type="KEGG" id="sjj:SPJ_1977"/>
<dbReference type="HOGENOM" id="CLU_041220_0_0_9"/>
<dbReference type="Proteomes" id="UP000002206">
    <property type="component" value="Chromosome"/>
</dbReference>
<dbReference type="GO" id="GO:0005829">
    <property type="term" value="C:cytosol"/>
    <property type="evidence" value="ECO:0007669"/>
    <property type="project" value="TreeGrafter"/>
</dbReference>
<dbReference type="GO" id="GO:0052908">
    <property type="term" value="F:16S rRNA (adenine(1518)-N(6)/adenine(1519)-N(6))-dimethyltransferase activity"/>
    <property type="evidence" value="ECO:0007669"/>
    <property type="project" value="UniProtKB-EC"/>
</dbReference>
<dbReference type="GO" id="GO:0003723">
    <property type="term" value="F:RNA binding"/>
    <property type="evidence" value="ECO:0007669"/>
    <property type="project" value="UniProtKB-KW"/>
</dbReference>
<dbReference type="CDD" id="cd02440">
    <property type="entry name" value="AdoMet_MTases"/>
    <property type="match status" value="1"/>
</dbReference>
<dbReference type="FunFam" id="1.10.8.100:FF:000005">
    <property type="entry name" value="Ribosomal RNA small subunit methyltransferase A"/>
    <property type="match status" value="1"/>
</dbReference>
<dbReference type="FunFam" id="3.40.50.150:FF:000023">
    <property type="entry name" value="Ribosomal RNA small subunit methyltransferase A"/>
    <property type="match status" value="1"/>
</dbReference>
<dbReference type="Gene3D" id="1.10.8.100">
    <property type="entry name" value="Ribosomal RNA adenine dimethylase-like, domain 2"/>
    <property type="match status" value="1"/>
</dbReference>
<dbReference type="Gene3D" id="3.40.50.150">
    <property type="entry name" value="Vaccinia Virus protein VP39"/>
    <property type="match status" value="1"/>
</dbReference>
<dbReference type="HAMAP" id="MF_00607">
    <property type="entry name" value="16SrRNA_methyltr_A"/>
    <property type="match status" value="1"/>
</dbReference>
<dbReference type="InterPro" id="IPR001737">
    <property type="entry name" value="KsgA/Erm"/>
</dbReference>
<dbReference type="InterPro" id="IPR023165">
    <property type="entry name" value="rRNA_Ade_diMease-like_C"/>
</dbReference>
<dbReference type="InterPro" id="IPR020596">
    <property type="entry name" value="rRNA_Ade_Mease_Trfase_CS"/>
</dbReference>
<dbReference type="InterPro" id="IPR020598">
    <property type="entry name" value="rRNA_Ade_methylase_Trfase_N"/>
</dbReference>
<dbReference type="InterPro" id="IPR011530">
    <property type="entry name" value="rRNA_adenine_dimethylase"/>
</dbReference>
<dbReference type="InterPro" id="IPR029063">
    <property type="entry name" value="SAM-dependent_MTases_sf"/>
</dbReference>
<dbReference type="NCBIfam" id="TIGR00755">
    <property type="entry name" value="ksgA"/>
    <property type="match status" value="1"/>
</dbReference>
<dbReference type="PANTHER" id="PTHR11727">
    <property type="entry name" value="DIMETHYLADENOSINE TRANSFERASE"/>
    <property type="match status" value="1"/>
</dbReference>
<dbReference type="PANTHER" id="PTHR11727:SF7">
    <property type="entry name" value="DIMETHYLADENOSINE TRANSFERASE-RELATED"/>
    <property type="match status" value="1"/>
</dbReference>
<dbReference type="Pfam" id="PF00398">
    <property type="entry name" value="RrnaAD"/>
    <property type="match status" value="1"/>
</dbReference>
<dbReference type="SMART" id="SM00650">
    <property type="entry name" value="rADc"/>
    <property type="match status" value="1"/>
</dbReference>
<dbReference type="SUPFAM" id="SSF53335">
    <property type="entry name" value="S-adenosyl-L-methionine-dependent methyltransferases"/>
    <property type="match status" value="1"/>
</dbReference>
<dbReference type="PROSITE" id="PS01131">
    <property type="entry name" value="RRNA_A_DIMETH"/>
    <property type="match status" value="1"/>
</dbReference>
<dbReference type="PROSITE" id="PS51689">
    <property type="entry name" value="SAM_RNA_A_N6_MT"/>
    <property type="match status" value="1"/>
</dbReference>
<sequence length="290" mass="32268">MRIADYSVTKAVLERHGFTFKKSFGQNFLTDTNILQKIVDTAEIDDQVNVIEIGPGIGALTEFLAERAAQVMAFEIDHRLMPILADTLRDFDNVTVVNEDILKVDLAQHIQNFKNPNLPIKVVANLPYYITTPILMHLIESGIPFCEFVVMMQKEVADRISAQPNTKAYGSLSIAVQYYMTAKVAFIVPRTVFVPAPNVDSAILKMVRRPEPAVAVEDENFFFKVSKASFTHRRKTLWNNLTGYFGKTEEVKDKLTKALDQAGLSPSVRGEALSLAEFAGLADALKGQGL</sequence>
<name>RSMA_STRZJ</name>
<gene>
    <name evidence="1" type="primary">rsmA</name>
    <name evidence="1" type="synonym">ksgA</name>
    <name type="ordered locus">SPJ_1977</name>
</gene>
<proteinExistence type="inferred from homology"/>
<evidence type="ECO:0000255" key="1">
    <source>
        <dbReference type="HAMAP-Rule" id="MF_00607"/>
    </source>
</evidence>
<keyword id="KW-0963">Cytoplasm</keyword>
<keyword id="KW-0489">Methyltransferase</keyword>
<keyword id="KW-0694">RNA-binding</keyword>
<keyword id="KW-0698">rRNA processing</keyword>
<keyword id="KW-0949">S-adenosyl-L-methionine</keyword>
<keyword id="KW-0808">Transferase</keyword>
<accession>C1CGR5</accession>
<comment type="function">
    <text evidence="1">Specifically dimethylates two adjacent adenosines (A1518 and A1519) in the loop of a conserved hairpin near the 3'-end of 16S rRNA in the 30S particle. May play a critical role in biogenesis of 30S subunits.</text>
</comment>
<comment type="catalytic activity">
    <reaction evidence="1">
        <text>adenosine(1518)/adenosine(1519) in 16S rRNA + 4 S-adenosyl-L-methionine = N(6)-dimethyladenosine(1518)/N(6)-dimethyladenosine(1519) in 16S rRNA + 4 S-adenosyl-L-homocysteine + 4 H(+)</text>
        <dbReference type="Rhea" id="RHEA:19609"/>
        <dbReference type="Rhea" id="RHEA-COMP:10232"/>
        <dbReference type="Rhea" id="RHEA-COMP:10233"/>
        <dbReference type="ChEBI" id="CHEBI:15378"/>
        <dbReference type="ChEBI" id="CHEBI:57856"/>
        <dbReference type="ChEBI" id="CHEBI:59789"/>
        <dbReference type="ChEBI" id="CHEBI:74411"/>
        <dbReference type="ChEBI" id="CHEBI:74493"/>
        <dbReference type="EC" id="2.1.1.182"/>
    </reaction>
</comment>
<comment type="subcellular location">
    <subcellularLocation>
        <location evidence="1">Cytoplasm</location>
    </subcellularLocation>
</comment>
<comment type="similarity">
    <text evidence="1">Belongs to the class I-like SAM-binding methyltransferase superfamily. rRNA adenine N(6)-methyltransferase family. RsmA subfamily.</text>
</comment>